<protein>
    <recommendedName>
        <fullName evidence="7">Portal protein</fullName>
    </recommendedName>
    <alternativeName>
        <fullName evidence="7">Gene product 1</fullName>
        <shortName>Gp1</shortName>
    </alternativeName>
    <alternativeName>
        <fullName evidence="7">Head-to-tail connector</fullName>
    </alternativeName>
</protein>
<name>PORTL_BPP22</name>
<gene>
    <name type="primary">1</name>
</gene>
<comment type="function">
    <text evidence="2 3 5">Forms the portal vertex of the capsid (PubMed:21499245). This portal plays critical roles in head assembly, genome packaging, neck/tail attachment, and genome ejection (PubMed:30787152, PubMed:30787152). Procapsid assembly may initiate with a nucleation complex composed of portal and scaffolding proteins (PubMed:30787152). The portal protein multimerizes as a single ring-shaped homododecamer arranged around a central channel (PubMed:21499245, PubMed:28134243). Switches upon genome packaging from an asymmetrical conformation in the procapsid (PC-portal) to a symmetrical ring in the mature capsid (MV-portal). This change of conformation may serve as a signal for headful packaging (PubMed:28134243).</text>
</comment>
<comment type="subunit">
    <text evidence="2 3 5 6">Homododecamer (PubMed:21499245, PubMed:28134243, PubMed:37952769). Interacts with the terminase large subunit; this interaction allows the packaging of viral DNA (PubMed:28134243). Interacts (via C-terminus) with the head-to-tail adapter protein gp4; this interaction participates in the head completion (PubMed:28134243, PubMed:37952769). Interacts with the scaffolding protein; this interaction initiates procapsid assembly, thereby ensuring incorporation of only one portal ring per capsid (PubMed:30787152). Interacts with the capsid protein (PubMed:37952769).</text>
</comment>
<comment type="subcellular location">
    <subcellularLocation>
        <location evidence="6">Virion</location>
    </subcellularLocation>
</comment>
<comment type="similarity">
    <text evidence="7">Belongs to the p22likevirus portal protein family.</text>
</comment>
<feature type="initiator methionine" description="Removed; by host" evidence="1">
    <location>
        <position position="1"/>
    </location>
</feature>
<feature type="chain" id="PRO_0000077747" description="Portal protein">
    <location>
        <begin position="2"/>
        <end position="725"/>
    </location>
</feature>
<feature type="mutagenesis site" description="Overpackaging." evidence="4">
    <original>V</original>
    <variation>A</variation>
    <variation>T</variation>
    <variation>M</variation>
    <location>
        <position position="64"/>
    </location>
</feature>
<feature type="mutagenesis site" description="Overpackaging." evidence="4">
    <original>V</original>
    <variation>A</variation>
    <variation>T</variation>
    <variation>M</variation>
    <variation>Y</variation>
    <location>
        <position position="303"/>
    </location>
</feature>
<feature type="helix" evidence="15">
    <location>
        <begin position="7"/>
        <end position="21"/>
    </location>
</feature>
<feature type="helix" evidence="15">
    <location>
        <begin position="23"/>
        <end position="37"/>
    </location>
</feature>
<feature type="helix" evidence="15">
    <location>
        <begin position="61"/>
        <end position="72"/>
    </location>
</feature>
<feature type="strand" evidence="15">
    <location>
        <begin position="77"/>
        <end position="82"/>
    </location>
</feature>
<feature type="turn" evidence="15">
    <location>
        <begin position="88"/>
        <end position="91"/>
    </location>
</feature>
<feature type="helix" evidence="15">
    <location>
        <begin position="92"/>
        <end position="101"/>
    </location>
</feature>
<feature type="helix" evidence="15">
    <location>
        <begin position="105"/>
        <end position="120"/>
    </location>
</feature>
<feature type="strand" evidence="15">
    <location>
        <begin position="122"/>
        <end position="132"/>
    </location>
</feature>
<feature type="strand" evidence="15">
    <location>
        <begin position="134"/>
        <end position="136"/>
    </location>
</feature>
<feature type="strand" evidence="15">
    <location>
        <begin position="142"/>
        <end position="151"/>
    </location>
</feature>
<feature type="helix" evidence="15">
    <location>
        <begin position="152"/>
        <end position="155"/>
    </location>
</feature>
<feature type="strand" evidence="15">
    <location>
        <begin position="156"/>
        <end position="158"/>
    </location>
</feature>
<feature type="strand" evidence="15">
    <location>
        <begin position="172"/>
        <end position="179"/>
    </location>
</feature>
<feature type="helix" evidence="15">
    <location>
        <begin position="181"/>
        <end position="190"/>
    </location>
</feature>
<feature type="strand" evidence="15">
    <location>
        <begin position="195"/>
        <end position="197"/>
    </location>
</feature>
<feature type="strand" evidence="15">
    <location>
        <begin position="217"/>
        <end position="236"/>
    </location>
</feature>
<feature type="strand" evidence="15">
    <location>
        <begin position="238"/>
        <end position="241"/>
    </location>
</feature>
<feature type="strand" evidence="15">
    <location>
        <begin position="244"/>
        <end position="246"/>
    </location>
</feature>
<feature type="turn" evidence="15">
    <location>
        <begin position="247"/>
        <end position="250"/>
    </location>
</feature>
<feature type="strand" evidence="15">
    <location>
        <begin position="251"/>
        <end position="254"/>
    </location>
</feature>
<feature type="helix" evidence="15">
    <location>
        <begin position="257"/>
        <end position="261"/>
    </location>
</feature>
<feature type="strand" evidence="15">
    <location>
        <begin position="264"/>
        <end position="281"/>
    </location>
</feature>
<feature type="strand" evidence="15">
    <location>
        <begin position="286"/>
        <end position="297"/>
    </location>
</feature>
<feature type="strand" evidence="15">
    <location>
        <begin position="299"/>
        <end position="312"/>
    </location>
</feature>
<feature type="strand" evidence="15">
    <location>
        <begin position="314"/>
        <end position="317"/>
    </location>
</feature>
<feature type="helix" evidence="15">
    <location>
        <begin position="321"/>
        <end position="323"/>
    </location>
</feature>
<feature type="helix" evidence="15">
    <location>
        <begin position="324"/>
        <end position="342"/>
    </location>
</feature>
<feature type="strand" evidence="15">
    <location>
        <begin position="349"/>
        <end position="351"/>
    </location>
</feature>
<feature type="turn" evidence="15">
    <location>
        <begin position="353"/>
        <end position="355"/>
    </location>
</feature>
<feature type="helix" evidence="15">
    <location>
        <begin position="360"/>
        <end position="362"/>
    </location>
</feature>
<feature type="strand" evidence="15">
    <location>
        <begin position="363"/>
        <end position="365"/>
    </location>
</feature>
<feature type="strand" evidence="15">
    <location>
        <begin position="370"/>
        <end position="373"/>
    </location>
</feature>
<feature type="turn" evidence="15">
    <location>
        <begin position="379"/>
        <end position="381"/>
    </location>
</feature>
<feature type="helix" evidence="15">
    <location>
        <begin position="399"/>
        <end position="415"/>
    </location>
</feature>
<feature type="helix" evidence="14">
    <location>
        <begin position="424"/>
        <end position="426"/>
    </location>
</feature>
<feature type="helix" evidence="14">
    <location>
        <begin position="431"/>
        <end position="434"/>
    </location>
</feature>
<feature type="turn" evidence="14">
    <location>
        <begin position="435"/>
        <end position="437"/>
    </location>
</feature>
<feature type="turn" evidence="14">
    <location>
        <begin position="439"/>
        <end position="441"/>
    </location>
</feature>
<feature type="helix" evidence="15">
    <location>
        <begin position="447"/>
        <end position="471"/>
    </location>
</feature>
<feature type="strand" evidence="14">
    <location>
        <begin position="474"/>
        <end position="476"/>
    </location>
</feature>
<feature type="strand" evidence="15">
    <location>
        <begin position="497"/>
        <end position="499"/>
    </location>
</feature>
<feature type="strand" evidence="15">
    <location>
        <begin position="505"/>
        <end position="507"/>
    </location>
</feature>
<feature type="strand" evidence="15">
    <location>
        <begin position="516"/>
        <end position="521"/>
    </location>
</feature>
<feature type="helix" evidence="15">
    <location>
        <begin position="527"/>
        <end position="539"/>
    </location>
</feature>
<feature type="helix" evidence="15">
    <location>
        <begin position="546"/>
        <end position="557"/>
    </location>
</feature>
<feature type="strand" evidence="14">
    <location>
        <begin position="560"/>
        <end position="563"/>
    </location>
</feature>
<feature type="helix" evidence="15">
    <location>
        <begin position="564"/>
        <end position="578"/>
    </location>
</feature>
<feature type="helix" evidence="15">
    <location>
        <begin position="587"/>
        <end position="601"/>
    </location>
</feature>
<feature type="helix" evidence="15">
    <location>
        <begin position="606"/>
        <end position="646"/>
    </location>
</feature>
<dbReference type="EMBL" id="M59749">
    <property type="protein sequence ID" value="AAA72961.1"/>
    <property type="molecule type" value="Genomic_DNA"/>
</dbReference>
<dbReference type="EMBL" id="AF217253">
    <property type="protein sequence ID" value="AAF75045.1"/>
    <property type="molecule type" value="Genomic_DNA"/>
</dbReference>
<dbReference type="EMBL" id="BK000583">
    <property type="protein sequence ID" value="DAA00985.1"/>
    <property type="molecule type" value="Genomic_DNA"/>
</dbReference>
<dbReference type="PIR" id="C40474">
    <property type="entry name" value="Z1BP22"/>
</dbReference>
<dbReference type="RefSeq" id="YP_063735.1">
    <property type="nucleotide sequence ID" value="NC_002371.2"/>
</dbReference>
<dbReference type="PDB" id="3LJ5">
    <property type="method" value="X-ray"/>
    <property type="resolution" value="7.50 A"/>
    <property type="chains" value="A/B/C/D/E/F/G/H/I/J/K/L=1-725"/>
</dbReference>
<dbReference type="PDB" id="4V4K">
    <property type="method" value="X-ray"/>
    <property type="resolution" value="3.25 A"/>
    <property type="chains" value="A/B/C/D/E/F/G/H/I/J/K/L/M/N/O/P/Q/R/S/T/U/V/W/X=1-602"/>
</dbReference>
<dbReference type="PDB" id="5GAI">
    <property type="method" value="EM"/>
    <property type="resolution" value="10.50 A"/>
    <property type="chains" value="A/B/C/D/E/F/G/H/I/J/W/X=5-721"/>
</dbReference>
<dbReference type="PDB" id="5JJ1">
    <property type="method" value="X-ray"/>
    <property type="resolution" value="3.30 A"/>
    <property type="chains" value="A/B/C/D/E/F/G/H/I/J/K/L=1-602"/>
</dbReference>
<dbReference type="PDB" id="5JJ3">
    <property type="method" value="X-ray"/>
    <property type="resolution" value="7.00 A"/>
    <property type="chains" value="A/B/C/D/E/F/G/H/I/J/K/L=1-725"/>
</dbReference>
<dbReference type="PDB" id="8EAO">
    <property type="method" value="EM"/>
    <property type="resolution" value="3.20 A"/>
    <property type="chains" value="B/D/F/H/J/L/N/P/R/T/V/X=6-626"/>
</dbReference>
<dbReference type="PDB" id="8TVU">
    <property type="method" value="EM"/>
    <property type="resolution" value="3.00 A"/>
    <property type="chains" value="A/B/D/F/H/J/L/N/P/R/T/W=1-725"/>
</dbReference>
<dbReference type="PDB" id="8U10">
    <property type="method" value="EM"/>
    <property type="resolution" value="3.20 A"/>
    <property type="chains" value="a/b/c/d/e/f/g/h/i/j/k/l=1-725"/>
</dbReference>
<dbReference type="PDB" id="8U11">
    <property type="method" value="EM"/>
    <property type="resolution" value="3.10 A"/>
    <property type="chains" value="a/b/c/d/e/f/g/h/i/j/k/l=1-725"/>
</dbReference>
<dbReference type="PDB" id="9KYW">
    <property type="method" value="EM"/>
    <property type="resolution" value="6.70 A"/>
    <property type="chains" value="B/L=1-725"/>
</dbReference>
<dbReference type="PDBsum" id="3LJ5"/>
<dbReference type="PDBsum" id="4V4K"/>
<dbReference type="PDBsum" id="5GAI"/>
<dbReference type="PDBsum" id="5JJ1"/>
<dbReference type="PDBsum" id="5JJ3"/>
<dbReference type="PDBsum" id="8EAO"/>
<dbReference type="PDBsum" id="8TVU"/>
<dbReference type="PDBsum" id="8U10"/>
<dbReference type="PDBsum" id="8U11"/>
<dbReference type="PDBsum" id="9KYW"/>
<dbReference type="EMDB" id="EMD-41651"/>
<dbReference type="EMDB" id="EMD-41791"/>
<dbReference type="EMDB" id="EMD-41792"/>
<dbReference type="EMDB" id="EMD-8005"/>
<dbReference type="SMR" id="P26744"/>
<dbReference type="DIP" id="DIP-59581N"/>
<dbReference type="IntAct" id="P26744">
    <property type="interactions" value="1"/>
</dbReference>
<dbReference type="TCDB" id="1.W.1.1.1">
    <property type="family name" value="the phage portal protein 1 (ppp1) family"/>
</dbReference>
<dbReference type="GeneID" id="2944241"/>
<dbReference type="KEGG" id="vg:2944241"/>
<dbReference type="OrthoDB" id="10494at10239"/>
<dbReference type="EvolutionaryTrace" id="P26744"/>
<dbReference type="Proteomes" id="UP000001795">
    <property type="component" value="Segment"/>
</dbReference>
<dbReference type="Proteomes" id="UP000007960">
    <property type="component" value="Segment"/>
</dbReference>
<dbReference type="GO" id="GO:0046798">
    <property type="term" value="C:viral portal complex"/>
    <property type="evidence" value="ECO:0000314"/>
    <property type="project" value="UniProtKB"/>
</dbReference>
<dbReference type="GO" id="GO:0099002">
    <property type="term" value="P:symbiont genome ejection through host cell envelope, short tail mechanism"/>
    <property type="evidence" value="ECO:0000314"/>
    <property type="project" value="UniProtKB"/>
</dbReference>
<dbReference type="GO" id="GO:0019073">
    <property type="term" value="P:viral DNA genome packaging"/>
    <property type="evidence" value="ECO:0000315"/>
    <property type="project" value="UniProtKB"/>
</dbReference>
<dbReference type="GO" id="GO:0098006">
    <property type="term" value="P:viral DNA genome packaging, headful"/>
    <property type="evidence" value="ECO:0000315"/>
    <property type="project" value="CACAO"/>
</dbReference>
<dbReference type="GO" id="GO:0019068">
    <property type="term" value="P:virion assembly"/>
    <property type="evidence" value="ECO:0000314"/>
    <property type="project" value="UniProtKB"/>
</dbReference>
<dbReference type="FunFam" id="1.10.1740.160:FF:000001">
    <property type="entry name" value="Phage portal"/>
    <property type="match status" value="1"/>
</dbReference>
<dbReference type="Gene3D" id="1.10.1740.160">
    <property type="match status" value="3"/>
</dbReference>
<dbReference type="Gene3D" id="6.10.280.90">
    <property type="match status" value="1"/>
</dbReference>
<dbReference type="InterPro" id="IPR032427">
    <property type="entry name" value="P22_portal"/>
</dbReference>
<dbReference type="Pfam" id="PF16510">
    <property type="entry name" value="P22_portal"/>
    <property type="match status" value="1"/>
</dbReference>
<evidence type="ECO:0000269" key="1">
    <source>
    </source>
</evidence>
<evidence type="ECO:0000269" key="2">
    <source>
    </source>
</evidence>
<evidence type="ECO:0000269" key="3">
    <source>
    </source>
</evidence>
<evidence type="ECO:0000269" key="4">
    <source>
    </source>
</evidence>
<evidence type="ECO:0000269" key="5">
    <source>
    </source>
</evidence>
<evidence type="ECO:0000269" key="6">
    <source>
    </source>
</evidence>
<evidence type="ECO:0000305" key="7"/>
<evidence type="ECO:0007744" key="8">
    <source>
        <dbReference type="PDB" id="3LJ5"/>
    </source>
</evidence>
<evidence type="ECO:0007744" key="9">
    <source>
        <dbReference type="PDB" id="4V4K"/>
    </source>
</evidence>
<evidence type="ECO:0007744" key="10">
    <source>
        <dbReference type="PDB" id="5JJ1"/>
    </source>
</evidence>
<evidence type="ECO:0007744" key="11">
    <source>
        <dbReference type="PDB" id="5JJ3"/>
    </source>
</evidence>
<evidence type="ECO:0007744" key="12">
    <source>
        <dbReference type="PDB" id="8U10"/>
    </source>
</evidence>
<evidence type="ECO:0007744" key="13">
    <source>
        <dbReference type="PDB" id="8U11"/>
    </source>
</evidence>
<evidence type="ECO:0007829" key="14">
    <source>
        <dbReference type="PDB" id="5JJ1"/>
    </source>
</evidence>
<evidence type="ECO:0007829" key="15">
    <source>
        <dbReference type="PDB" id="8TVU"/>
    </source>
</evidence>
<organismHost>
    <name type="scientific">Salmonella typhimurium</name>
    <dbReference type="NCBI Taxonomy" id="90371"/>
</organismHost>
<organism>
    <name type="scientific">Salmonella phage P22</name>
    <name type="common">Bacteriophage P22</name>
    <dbReference type="NCBI Taxonomy" id="10754"/>
    <lineage>
        <taxon>Viruses</taxon>
        <taxon>Duplodnaviria</taxon>
        <taxon>Heunggongvirae</taxon>
        <taxon>Uroviricota</taxon>
        <taxon>Caudoviricetes</taxon>
        <taxon>Lederbergvirus</taxon>
    </lineage>
</organism>
<keyword id="KW-0002">3D-structure</keyword>
<keyword id="KW-0167">Capsid protein</keyword>
<keyword id="KW-0903">Direct protein sequencing</keyword>
<keyword id="KW-0426">Late protein</keyword>
<keyword id="KW-1185">Reference proteome</keyword>
<keyword id="KW-0118">Viral capsid assembly</keyword>
<keyword id="KW-1171">Viral genome ejection through host cell envelope</keyword>
<keyword id="KW-0231">Viral genome packaging</keyword>
<keyword id="KW-1162">Viral penetration into host cytoplasm</keyword>
<keyword id="KW-1188">Viral release from host cell</keyword>
<keyword id="KW-1244">Viral short tail ejection system</keyword>
<keyword id="KW-0946">Virion</keyword>
<keyword id="KW-1160">Virus entry into host cell</keyword>
<sequence>MADNENRLESILSRFDADWTASDEARREAKNDLFFSRVSQWDDWLSQYTTLQYRGQFDVVRPVVRKLVSEMRQNPIDVLYRPKDGARPDAADVLMGMYRTDMRHNTAKIAVNIAVREQIEAGVGAWRLVTDYEDQSPTSNNQVIRREPIHSACSHVIWDSNSKLMDKSDARHCTVIHSMSQNGWEDFAEKYDLDADDIPSFQNPNDWVFPWLTQDTIQIAEFYEVVEKKETAFIYQDPVTGEPVSYFKRDIKDVIDDLADSGFIKIAERQIKRRRVYKSIITCTAVLKDKQLIAGEHIPIVPVFGEWGFVEDKEVYEGVVRLTKDGQRLRNMIMSFNADIVARTPKKKPFFWPEQIAGFEHMYDGNDDYPYYLLNRTDENSGDLPTQPLAYYENPEVPQANAYMLEAATSAVKEVATLGVDTEAVNGGQVAFDTVNQLNMRADLETYVFQDNLATAMRRDGEIYQSIVNDIYDVPRNVTITLEDGSEKDVQLMAEVVDLATGEKQVLNDIRGRYECYTDVGPSFQSMKQQNRAEILELLGKTPQGTPEYQLLLLQYFTLLDGKGVEMMRDYANKQLIQMGVKKPETPEEQQWLVEAQQAKQGQQDPAMVQAQGVLLQGQAELAKAQNQTLSLQIDAAKVEAQNQLNAARIAEIFNNMDLSKQSEFREFLKTVASFQQDRSEDARANAELLLKGDEQTHKQRMDIANILQSQRQNQPSGSVAETPQ</sequence>
<reference key="1">
    <citation type="journal article" date="1991" name="Virology">
        <title>Nucleotide sequence of the bacteriophage P22 genes required for DNA packaging.</title>
        <authorList>
            <person name="Eppler K."/>
            <person name="Wyckoff E."/>
            <person name="Goates J."/>
            <person name="Parr R."/>
            <person name="Casjens S."/>
        </authorList>
    </citation>
    <scope>NUCLEOTIDE SEQUENCE [GENOMIC DNA]</scope>
    <scope>PROTEIN SEQUENCE OF 2-6</scope>
</reference>
<reference key="2">
    <citation type="journal article" date="2000" name="J. Bacteriol.">
        <title>Sequence of the genome of Salmonella bacteriophage P22.</title>
        <authorList>
            <person name="Vander Byl C.S."/>
            <person name="Kropinski A.M.B."/>
        </authorList>
    </citation>
    <scope>NUCLEOTIDE SEQUENCE [LARGE SCALE GENOMIC DNA]</scope>
</reference>
<reference key="3">
    <citation type="journal article" date="2003" name="J. Bacteriol.">
        <title>Corrected sequence of the bacteriophage P22 genome.</title>
        <authorList>
            <person name="Pedulla M.L."/>
            <person name="Ford M.E."/>
            <person name="Karthikeyan T."/>
            <person name="Houtz J.M."/>
            <person name="Hendrix R.W."/>
            <person name="Hatfull G.F."/>
            <person name="Poteete A.R."/>
            <person name="Gilcrease E.B."/>
            <person name="Winn-Stapley D.A."/>
            <person name="Casjens S.R."/>
        </authorList>
    </citation>
    <scope>NUCLEOTIDE SEQUENCE [LARGE SCALE GENOMIC DNA]</scope>
</reference>
<reference key="4">
    <citation type="journal article" date="2017" name="Virology">
        <title>Targeted mutagenesis of the P22 portal protein reveals the mechanism of signal transmission during DNA packaging.</title>
        <authorList>
            <person name="Bedwell G.J."/>
            <person name="Prevelige P.E. Jr."/>
        </authorList>
    </citation>
    <scope>MUTAGENESIS OF VAL-64 AND VAL-303</scope>
    <scope>FUNCTION</scope>
</reference>
<reference key="5">
    <citation type="journal article" date="2019" name="J. Virol.">
        <title>Architect of Virus Assembly: the Portal Protein Nucleates Procapsid Assembly in Bacteriophage P22.</title>
        <authorList>
            <person name="Motwani T."/>
            <person name="Teschke C.M."/>
        </authorList>
    </citation>
    <scope>FUNCTION</scope>
    <scope>INTERACTION WITH THE SCAFFOLDING PROTEIN</scope>
</reference>
<reference evidence="8 9" key="6">
    <citation type="journal article" date="2011" name="Nat. Struct. Mol. Biol.">
        <title>Three-dimensional structure of a viral genome-delivery portal vertex.</title>
        <authorList>
            <person name="Olia A.S."/>
            <person name="Prevelige P.E. Jr."/>
            <person name="Johnson J.E."/>
            <person name="Cingolani G."/>
        </authorList>
    </citation>
    <scope>X-RAY CRYSTALLOGRAPHY (3.25 ANGSTROMS) OF 1-602</scope>
    <scope>SUBUNIT</scope>
    <scope>FUNCTION</scope>
</reference>
<reference evidence="10 11" key="7">
    <citation type="journal article" date="2017" name="Nat. Commun.">
        <title>Portal protein functions akin to a DNA-sensor that couples genome-packaging to icosahedral capsid maturation.</title>
        <authorList>
            <person name="Lokareddy R.K."/>
            <person name="Sankhala R.S."/>
            <person name="Roy A."/>
            <person name="Afonine P.V."/>
            <person name="Motwani T."/>
            <person name="Teschke C.M."/>
            <person name="Parent K.N."/>
            <person name="Cingolani G."/>
        </authorList>
    </citation>
    <scope>X-RAY CRYSTALLOGRAPHY (3.30 ANGSTROMS) OF 1-602</scope>
    <scope>FUNCTION</scope>
    <scope>INTERACTION WITH THE TERMINASE LARGE SUBUNIT</scope>
    <scope>INTERACTION WITH HEAD-TO-TAIL ADAPTER PROTEIN GP4</scope>
</reference>
<reference evidence="12 13" key="8">
    <citation type="journal article" date="2023" name="J. Mol. Biol.">
        <title>Molecular Architecture of Salmonella Typhimurium Virus P22 Genome Ejection Machinery.</title>
        <authorList>
            <person name="Iglesias S.M."/>
            <person name="Lokareddy R.K."/>
            <person name="Yang R."/>
            <person name="Li F."/>
            <person name="Yeggoni D.P."/>
            <person name="David Hou C.F."/>
            <person name="Leroux M.N."/>
            <person name="Cortines J.R."/>
            <person name="Leavitt J.C."/>
            <person name="Bird M."/>
            <person name="Casjens S.R."/>
            <person name="White S."/>
            <person name="Teschke C.M."/>
            <person name="Cingolani G."/>
        </authorList>
    </citation>
    <scope>STRUCTURE BY ELECTRON MICROSCOPY (3.10 ANGSTROMS)</scope>
    <scope>INTERACTION WITH THE CAPSID PROTEIN</scope>
    <scope>SUBCELLULAR LOCATION</scope>
    <scope>SUBUNIT</scope>
    <scope>INTERACTION WITH HEAD-TO-TAIL ADAPTER PROTEIN GP4</scope>
</reference>
<accession>P26744</accession>
<accession>Q7PCI7</accession>
<proteinExistence type="evidence at protein level"/>